<keyword id="KW-0963">Cytoplasm</keyword>
<keyword id="KW-0378">Hydrolase</keyword>
<keyword id="KW-0540">Nuclease</keyword>
<keyword id="KW-0690">Ribosome biogenesis</keyword>
<gene>
    <name type="ordered locus">WRi_001100</name>
</gene>
<reference key="1">
    <citation type="journal article" date="2009" name="Proc. Natl. Acad. Sci. U.S.A.">
        <title>The mosaic genome structure of the Wolbachia wRi strain infecting Drosophila simulans.</title>
        <authorList>
            <person name="Klasson L."/>
            <person name="Westberg J."/>
            <person name="Sapountzis P."/>
            <person name="Naeslund K."/>
            <person name="Lutnaes Y."/>
            <person name="Darby A.C."/>
            <person name="Veneti Z."/>
            <person name="Chen L."/>
            <person name="Braig H.R."/>
            <person name="Garrett R."/>
            <person name="Bourtzis K."/>
            <person name="Andersson S.G."/>
        </authorList>
    </citation>
    <scope>NUCLEOTIDE SEQUENCE [LARGE SCALE GENOMIC DNA]</scope>
    <source>
        <strain>wRi</strain>
    </source>
</reference>
<comment type="function">
    <text evidence="1">Could be a nuclease involved in processing of the 5'-end of pre-16S rRNA.</text>
</comment>
<comment type="subcellular location">
    <subcellularLocation>
        <location evidence="1">Cytoplasm</location>
    </subcellularLocation>
</comment>
<comment type="similarity">
    <text evidence="1">Belongs to the YqgF nuclease family.</text>
</comment>
<evidence type="ECO:0000255" key="1">
    <source>
        <dbReference type="HAMAP-Rule" id="MF_00651"/>
    </source>
</evidence>
<proteinExistence type="inferred from homology"/>
<sequence>MLHRNPDEFLKSIPKDKRIMCLDMGEKQIGIAFSDKTQLIATAHSIYHRKNMSKDLGYLHRIFKENEAGSMVIGIPLNIDEQETKWCKTIIQFANKIIKKYKVNTYLQDESLSTSIATHTLKITGISITKSKKIDDKISACIILQRTLDKINTIK</sequence>
<organism>
    <name type="scientific">Wolbachia sp. subsp. Drosophila simulans (strain wRi)</name>
    <dbReference type="NCBI Taxonomy" id="66084"/>
    <lineage>
        <taxon>Bacteria</taxon>
        <taxon>Pseudomonadati</taxon>
        <taxon>Pseudomonadota</taxon>
        <taxon>Alphaproteobacteria</taxon>
        <taxon>Rickettsiales</taxon>
        <taxon>Anaplasmataceae</taxon>
        <taxon>Wolbachieae</taxon>
        <taxon>Wolbachia</taxon>
    </lineage>
</organism>
<name>YQGF_WOLWR</name>
<dbReference type="EC" id="3.1.-.-" evidence="1"/>
<dbReference type="EMBL" id="CP001391">
    <property type="protein sequence ID" value="ACN94964.1"/>
    <property type="molecule type" value="Genomic_DNA"/>
</dbReference>
<dbReference type="SMR" id="C0R5C2"/>
<dbReference type="STRING" id="66084.WRi_001100"/>
<dbReference type="KEGG" id="wri:WRi_001100"/>
<dbReference type="HOGENOM" id="CLU_098240_2_2_5"/>
<dbReference type="Proteomes" id="UP000001293">
    <property type="component" value="Chromosome"/>
</dbReference>
<dbReference type="GO" id="GO:0005829">
    <property type="term" value="C:cytosol"/>
    <property type="evidence" value="ECO:0007669"/>
    <property type="project" value="TreeGrafter"/>
</dbReference>
<dbReference type="GO" id="GO:0004518">
    <property type="term" value="F:nuclease activity"/>
    <property type="evidence" value="ECO:0007669"/>
    <property type="project" value="UniProtKB-KW"/>
</dbReference>
<dbReference type="GO" id="GO:0000967">
    <property type="term" value="P:rRNA 5'-end processing"/>
    <property type="evidence" value="ECO:0007669"/>
    <property type="project" value="UniProtKB-UniRule"/>
</dbReference>
<dbReference type="CDD" id="cd16964">
    <property type="entry name" value="YqgF"/>
    <property type="match status" value="1"/>
</dbReference>
<dbReference type="Gene3D" id="3.30.420.140">
    <property type="entry name" value="YqgF/RNase H-like domain"/>
    <property type="match status" value="1"/>
</dbReference>
<dbReference type="HAMAP" id="MF_00651">
    <property type="entry name" value="Nuclease_YqgF"/>
    <property type="match status" value="1"/>
</dbReference>
<dbReference type="InterPro" id="IPR012337">
    <property type="entry name" value="RNaseH-like_sf"/>
</dbReference>
<dbReference type="InterPro" id="IPR005227">
    <property type="entry name" value="YqgF"/>
</dbReference>
<dbReference type="InterPro" id="IPR006641">
    <property type="entry name" value="YqgF/RNaseH-like_dom"/>
</dbReference>
<dbReference type="InterPro" id="IPR037027">
    <property type="entry name" value="YqgF/RNaseH-like_dom_sf"/>
</dbReference>
<dbReference type="NCBIfam" id="TIGR00250">
    <property type="entry name" value="RNAse_H_YqgF"/>
    <property type="match status" value="1"/>
</dbReference>
<dbReference type="PANTHER" id="PTHR33317">
    <property type="entry name" value="POLYNUCLEOTIDYL TRANSFERASE, RIBONUCLEASE H-LIKE SUPERFAMILY PROTEIN"/>
    <property type="match status" value="1"/>
</dbReference>
<dbReference type="PANTHER" id="PTHR33317:SF4">
    <property type="entry name" value="POLYNUCLEOTIDYL TRANSFERASE, RIBONUCLEASE H-LIKE SUPERFAMILY PROTEIN"/>
    <property type="match status" value="1"/>
</dbReference>
<dbReference type="Pfam" id="PF03652">
    <property type="entry name" value="RuvX"/>
    <property type="match status" value="1"/>
</dbReference>
<dbReference type="SMART" id="SM00732">
    <property type="entry name" value="YqgFc"/>
    <property type="match status" value="1"/>
</dbReference>
<dbReference type="SUPFAM" id="SSF53098">
    <property type="entry name" value="Ribonuclease H-like"/>
    <property type="match status" value="1"/>
</dbReference>
<protein>
    <recommendedName>
        <fullName evidence="1">Putative pre-16S rRNA nuclease</fullName>
        <ecNumber evidence="1">3.1.-.-</ecNumber>
    </recommendedName>
</protein>
<feature type="chain" id="PRO_1000147499" description="Putative pre-16S rRNA nuclease">
    <location>
        <begin position="1"/>
        <end position="155"/>
    </location>
</feature>
<accession>C0R5C2</accession>